<name>TAF1C_RAT</name>
<sequence>MDFPSTLRPSLFMAGPLGMTDGPDLSFMCSWRDALTLPGAQPQNCRDQTSSFAKNLLWEPSTPGPLPLVPPGPDPWDPGLAAQDFLFRGGHYYQYQSRVVLDVTEQLSRFLWDHGDIAFAPLGKLMLENFRLEGNRGYSKKVTIVSVKRLLQDLGGHQPWGCPWASLSRRLRRFSILGGPVLSRSVSLLMGRLLHEELATRWEQLLMDEAFTGGALAWLPGRTARAGQLVYPSGGALDKLYFQEVSVNSGGNPRVLEDPGHIQLRGPVRQVVTSTVQGETLLAVRSDYHCAVWKIDKQEPPAPLQVLQVEKGATGISLSPHLSGELAICSRSGTVCLWTPQDGLQTIYKDPETLAFRDPSPWRWADFTAHPRVLTVGDRTGVKMVDIQGPPGCGLLLFCAGAEAACQKGERVLLAQYLGQPGPASTSLHLICTQFSIYLMDERLPLVPMLKWDHGLPSAPLLARLLPPASPGYPRPLLLGGQGGQVQLLHIAGEGTSIPQLAGPPQSLPSITDSLSAFPLLEPKRQQQLQERLEAPVIGLAAAPPCASAPGLLLFQLSAAGDVFYQHLRIQQTSSLREPDHPAPERPASRAAAPPVDQGSTPSWTSRASARCSRWLEALMELSPTNPVWAAPTFSHRRFLGHMERQKSQETLAQKLQAAMAKGQLLRPGDLGTLPKAEPPPAPQCSQQDELTERLTKAWEGQAAAWWKRHQDQTSGSQRQSKRPKRRTQLSSTFSSFTSYMDSPDASSAPHSQDLSNSEACPQPPRTPPSQELTQELWAQGVQHERRQTLRDYMAKLPLQDNPGPVATPPSQTSSRQTRSFRQQTPVLSGSHPPRKKPRMGF</sequence>
<gene>
    <name type="primary">Taf1c</name>
</gene>
<evidence type="ECO:0000250" key="1"/>
<evidence type="ECO:0000250" key="2">
    <source>
        <dbReference type="UniProtKB" id="Q15572"/>
    </source>
</evidence>
<evidence type="ECO:0000256" key="3">
    <source>
        <dbReference type="SAM" id="MobiDB-lite"/>
    </source>
</evidence>
<comment type="function">
    <text evidence="1">Component of the transcription factor SL1/TIF-IB complex, which is involved in the assembly of the PIC (pre-initiation complex) during RNA polymerase I-dependent transcription. The rate of PIC formation probably is primarily dependent on the rate of association of SL1/TIF-IB with the rDNA promoter. SL1/TIF-IB is involved in stabilization of nucleolar transcription factor 1/UBTF on rDNA. Formation of SL1/TIF-IB excludes the association of TBP with TFIID subunits. Recruits RNA polymerase I to the rRNA gene promoter via interaction with RRN3 (By similarity).</text>
</comment>
<comment type="subunit">
    <text evidence="2">Component of the transcription factor SL1/TIF-IB complex, composed of TBP and at least TAF1A, TAF1B, TAF1C and TAF1D. In the complex interacts directly with TBP, TAF1A and TAF1B. Interaction of the SL1/TIF-IB subunits with TBP excludes interaction of TBP with the transcription factor IID (TFIID) subunits. Interacts with MYC and RRN3. Interacts with p53/TP53; the interaction prevents the association of SL1/TIF-IB with UBTF and represses RNA polymerase I transcription. Part of Pol I pre-initiation complex (PIC), in which Pol I core assembles with RRN3 and promoter-bound UTBF and SL1/TIF-IB complex.</text>
</comment>
<comment type="subcellular location">
    <subcellularLocation>
        <location evidence="2">Nucleus</location>
        <location evidence="2">Nucleolus</location>
    </subcellularLocation>
</comment>
<organism>
    <name type="scientific">Rattus norvegicus</name>
    <name type="common">Rat</name>
    <dbReference type="NCBI Taxonomy" id="10116"/>
    <lineage>
        <taxon>Eukaryota</taxon>
        <taxon>Metazoa</taxon>
        <taxon>Chordata</taxon>
        <taxon>Craniata</taxon>
        <taxon>Vertebrata</taxon>
        <taxon>Euteleostomi</taxon>
        <taxon>Mammalia</taxon>
        <taxon>Eutheria</taxon>
        <taxon>Euarchontoglires</taxon>
        <taxon>Glires</taxon>
        <taxon>Rodentia</taxon>
        <taxon>Myomorpha</taxon>
        <taxon>Muroidea</taxon>
        <taxon>Muridae</taxon>
        <taxon>Murinae</taxon>
        <taxon>Rattus</taxon>
    </lineage>
</organism>
<accession>Q6P773</accession>
<protein>
    <recommendedName>
        <fullName>TATA box-binding protein-associated factor, RNA polymerase I, subunit C</fullName>
    </recommendedName>
    <alternativeName>
        <fullName>TATA box-binding protein-associated factor 1C</fullName>
        <shortName>TBP-associated factor 1C</shortName>
    </alternativeName>
    <alternativeName>
        <fullName>Transcription initiation factor SL1/TIF-IB subunit C</fullName>
    </alternativeName>
</protein>
<proteinExistence type="evidence at transcript level"/>
<keyword id="KW-0238">DNA-binding</keyword>
<keyword id="KW-0539">Nucleus</keyword>
<keyword id="KW-0597">Phosphoprotein</keyword>
<keyword id="KW-1185">Reference proteome</keyword>
<keyword id="KW-0804">Transcription</keyword>
<keyword id="KW-0805">Transcription regulation</keyword>
<dbReference type="EMBL" id="BC061804">
    <property type="protein sequence ID" value="AAH61804.1"/>
    <property type="molecule type" value="mRNA"/>
</dbReference>
<dbReference type="RefSeq" id="NP_001014177.1">
    <property type="nucleotide sequence ID" value="NM_001014155.1"/>
</dbReference>
<dbReference type="FunCoup" id="Q6P773">
    <property type="interactions" value="2166"/>
</dbReference>
<dbReference type="STRING" id="10116.ENSRNOP00000020990"/>
<dbReference type="GlyGen" id="Q6P773">
    <property type="glycosylation" value="2 sites"/>
</dbReference>
<dbReference type="PhosphoSitePlus" id="Q6P773"/>
<dbReference type="PaxDb" id="10116-ENSRNOP00000020990"/>
<dbReference type="Ensembl" id="ENSRNOT00000020990.5">
    <property type="protein sequence ID" value="ENSRNOP00000020990.3"/>
    <property type="gene ID" value="ENSRNOG00000015632.6"/>
</dbReference>
<dbReference type="GeneID" id="361420"/>
<dbReference type="KEGG" id="rno:361420"/>
<dbReference type="UCSC" id="RGD:1305658">
    <property type="organism name" value="rat"/>
</dbReference>
<dbReference type="AGR" id="RGD:1305658"/>
<dbReference type="CTD" id="9013"/>
<dbReference type="RGD" id="1305658">
    <property type="gene designation" value="Taf1c"/>
</dbReference>
<dbReference type="eggNOG" id="ENOG502QTCT">
    <property type="taxonomic scope" value="Eukaryota"/>
</dbReference>
<dbReference type="GeneTree" id="ENSGT00390000010767"/>
<dbReference type="HOGENOM" id="CLU_360905_0_0_1"/>
<dbReference type="InParanoid" id="Q6P773"/>
<dbReference type="OMA" id="CCRRWLK"/>
<dbReference type="OrthoDB" id="2382881at2759"/>
<dbReference type="PhylomeDB" id="Q6P773"/>
<dbReference type="TreeFam" id="TF351959"/>
<dbReference type="Reactome" id="R-RNO-5250924">
    <property type="pathway name" value="B-WICH complex positively regulates rRNA expression"/>
</dbReference>
<dbReference type="Reactome" id="R-RNO-73762">
    <property type="pathway name" value="RNA Polymerase I Transcription Initiation"/>
</dbReference>
<dbReference type="Reactome" id="R-RNO-73772">
    <property type="pathway name" value="RNA Polymerase I Promoter Escape"/>
</dbReference>
<dbReference type="Reactome" id="R-RNO-73863">
    <property type="pathway name" value="RNA Polymerase I Transcription Termination"/>
</dbReference>
<dbReference type="PRO" id="PR:Q6P773"/>
<dbReference type="Proteomes" id="UP000002494">
    <property type="component" value="Chromosome 19"/>
</dbReference>
<dbReference type="Bgee" id="ENSRNOG00000015632">
    <property type="expression patterns" value="Expressed in thymus and 19 other cell types or tissues"/>
</dbReference>
<dbReference type="GO" id="GO:0001650">
    <property type="term" value="C:fibrillar center"/>
    <property type="evidence" value="ECO:0000318"/>
    <property type="project" value="GO_Central"/>
</dbReference>
<dbReference type="GO" id="GO:0005730">
    <property type="term" value="C:nucleolus"/>
    <property type="evidence" value="ECO:0000266"/>
    <property type="project" value="RGD"/>
</dbReference>
<dbReference type="GO" id="GO:0005654">
    <property type="term" value="C:nucleoplasm"/>
    <property type="evidence" value="ECO:0007669"/>
    <property type="project" value="Ensembl"/>
</dbReference>
<dbReference type="GO" id="GO:0005668">
    <property type="term" value="C:RNA polymerase transcription factor SL1 complex"/>
    <property type="evidence" value="ECO:0000266"/>
    <property type="project" value="RGD"/>
</dbReference>
<dbReference type="GO" id="GO:0001164">
    <property type="term" value="F:RNA polymerase I core promoter sequence-specific DNA binding"/>
    <property type="evidence" value="ECO:0000266"/>
    <property type="project" value="RGD"/>
</dbReference>
<dbReference type="GO" id="GO:0001181">
    <property type="term" value="F:RNA polymerase I general transcription initiation factor activity"/>
    <property type="evidence" value="ECO:0000266"/>
    <property type="project" value="RGD"/>
</dbReference>
<dbReference type="Gene3D" id="2.130.10.10">
    <property type="entry name" value="YVTN repeat-like/Quinoprotein amine dehydrogenase"/>
    <property type="match status" value="1"/>
</dbReference>
<dbReference type="InterPro" id="IPR038801">
    <property type="entry name" value="TAF1C"/>
</dbReference>
<dbReference type="InterPro" id="IPR049087">
    <property type="entry name" value="TAF1C_beta-prop"/>
</dbReference>
<dbReference type="InterPro" id="IPR049089">
    <property type="entry name" value="TAF1C_C"/>
</dbReference>
<dbReference type="InterPro" id="IPR049090">
    <property type="entry name" value="TAF1C_HB"/>
</dbReference>
<dbReference type="InterPro" id="IPR015943">
    <property type="entry name" value="WD40/YVTN_repeat-like_dom_sf"/>
</dbReference>
<dbReference type="InterPro" id="IPR036322">
    <property type="entry name" value="WD40_repeat_dom_sf"/>
</dbReference>
<dbReference type="PANTHER" id="PTHR15319">
    <property type="entry name" value="TATA BOX-BINDING PROTEIN ASSOCIATED FACTOR RNA POLYMERASE I SUBUNIT C"/>
    <property type="match status" value="1"/>
</dbReference>
<dbReference type="PANTHER" id="PTHR15319:SF1">
    <property type="entry name" value="TATA BOX-BINDING PROTEIN-ASSOCIATED FACTOR RNA POLYMERASE I SUBUNIT C"/>
    <property type="match status" value="1"/>
</dbReference>
<dbReference type="Pfam" id="PF20641">
    <property type="entry name" value="TAF1C_beta-prop"/>
    <property type="match status" value="1"/>
</dbReference>
<dbReference type="Pfam" id="PF20643">
    <property type="entry name" value="TAF1C_C"/>
    <property type="match status" value="1"/>
</dbReference>
<dbReference type="Pfam" id="PF20642">
    <property type="entry name" value="TAF1C_HB"/>
    <property type="match status" value="1"/>
</dbReference>
<dbReference type="SUPFAM" id="SSF50978">
    <property type="entry name" value="WD40 repeat-like"/>
    <property type="match status" value="1"/>
</dbReference>
<reference key="1">
    <citation type="journal article" date="2004" name="Genome Res.">
        <title>The status, quality, and expansion of the NIH full-length cDNA project: the Mammalian Gene Collection (MGC).</title>
        <authorList>
            <consortium name="The MGC Project Team"/>
        </authorList>
    </citation>
    <scope>NUCLEOTIDE SEQUENCE [LARGE SCALE MRNA]</scope>
    <source>
        <tissue>Prostate</tissue>
    </source>
</reference>
<feature type="chain" id="PRO_0000118865" description="TATA box-binding protein-associated factor, RNA polymerase I, subunit C">
    <location>
        <begin position="1"/>
        <end position="842"/>
    </location>
</feature>
<feature type="region of interest" description="Disordered" evidence="3">
    <location>
        <begin position="574"/>
        <end position="605"/>
    </location>
</feature>
<feature type="region of interest" description="Disordered" evidence="3">
    <location>
        <begin position="667"/>
        <end position="690"/>
    </location>
</feature>
<feature type="region of interest" description="Disordered" evidence="3">
    <location>
        <begin position="702"/>
        <end position="842"/>
    </location>
</feature>
<feature type="compositionally biased region" description="Basic and acidic residues" evidence="3">
    <location>
        <begin position="577"/>
        <end position="588"/>
    </location>
</feature>
<feature type="compositionally biased region" description="Polar residues" evidence="3">
    <location>
        <begin position="745"/>
        <end position="760"/>
    </location>
</feature>
<feature type="compositionally biased region" description="Basic and acidic residues" evidence="3">
    <location>
        <begin position="783"/>
        <end position="794"/>
    </location>
</feature>
<feature type="compositionally biased region" description="Low complexity" evidence="3">
    <location>
        <begin position="809"/>
        <end position="826"/>
    </location>
</feature>
<feature type="compositionally biased region" description="Basic residues" evidence="3">
    <location>
        <begin position="833"/>
        <end position="842"/>
    </location>
</feature>
<feature type="modified residue" description="Phosphothreonine" evidence="2">
    <location>
        <position position="808"/>
    </location>
</feature>